<keyword id="KW-0067">ATP-binding</keyword>
<keyword id="KW-0131">Cell cycle</keyword>
<keyword id="KW-0132">Cell division</keyword>
<keyword id="KW-0997">Cell inner membrane</keyword>
<keyword id="KW-1003">Cell membrane</keyword>
<keyword id="KW-0159">Chromosome partition</keyword>
<keyword id="KW-0238">DNA-binding</keyword>
<keyword id="KW-0472">Membrane</keyword>
<keyword id="KW-0547">Nucleotide-binding</keyword>
<keyword id="KW-0812">Transmembrane</keyword>
<keyword id="KW-1133">Transmembrane helix</keyword>
<gene>
    <name type="primary">ftsK</name>
    <name type="synonym">ftsQ</name>
    <name type="ordered locus">CJJ81176_0893</name>
</gene>
<feature type="chain" id="PRO_0000281902" description="DNA translocase FtsK">
    <location>
        <begin position="1"/>
        <end position="946"/>
    </location>
</feature>
<feature type="transmembrane region" description="Helical" evidence="2">
    <location>
        <begin position="15"/>
        <end position="35"/>
    </location>
</feature>
<feature type="transmembrane region" description="Helical" evidence="2">
    <location>
        <begin position="67"/>
        <end position="87"/>
    </location>
</feature>
<feature type="transmembrane region" description="Helical" evidence="2">
    <location>
        <begin position="92"/>
        <end position="112"/>
    </location>
</feature>
<feature type="topological domain" description="Cytoplasmic" evidence="2">
    <location>
        <begin position="113"/>
        <end position="946"/>
    </location>
</feature>
<feature type="domain" description="FtsK" evidence="3">
    <location>
        <begin position="620"/>
        <end position="810"/>
    </location>
</feature>
<feature type="binding site" evidence="3">
    <location>
        <begin position="640"/>
        <end position="645"/>
    </location>
    <ligand>
        <name>ATP</name>
        <dbReference type="ChEBI" id="CHEBI:30616"/>
    </ligand>
</feature>
<feature type="sequence conflict" description="In Ref. 1; AAA61512." evidence="4" ref="1">
    <original>S</original>
    <variation>Y</variation>
    <location>
        <position position="103"/>
    </location>
</feature>
<feature type="sequence conflict" description="In Ref. 1; AAA61512." evidence="4" ref="1">
    <original>EN</original>
    <variation>VF</variation>
    <location>
        <begin position="143"/>
        <end position="144"/>
    </location>
</feature>
<protein>
    <recommendedName>
        <fullName>DNA translocase FtsK</fullName>
    </recommendedName>
</protein>
<reference key="1">
    <citation type="journal article" date="1994" name="Gene">
        <title>Genetic organization of the region upstream from the Campylobacter jejuni flagellar gene flhA.</title>
        <authorList>
            <person name="Miller S."/>
            <person name="Pesci E.C."/>
            <person name="Pickett C.L."/>
        </authorList>
    </citation>
    <scope>NUCLEOTIDE SEQUENCE [GENOMIC DNA]</scope>
</reference>
<reference key="2">
    <citation type="submission" date="2006-12" db="EMBL/GenBank/DDBJ databases">
        <authorList>
            <person name="Fouts D.E."/>
            <person name="Nelson K.E."/>
            <person name="Sebastian Y."/>
        </authorList>
    </citation>
    <scope>NUCLEOTIDE SEQUENCE [LARGE SCALE GENOMIC DNA]</scope>
    <source>
        <strain>81-176</strain>
    </source>
</reference>
<accession>A1VZM0</accession>
<accession>Q46089</accession>
<accession>Q9PP45</accession>
<name>FTSK_CAMJJ</name>
<sequence>MLAPGMGEWVYKANLFLFGEFGYYYPFSLLILNYLYYKKKYKIENFKRRELFGFSLAFFSTLLLFSVFYREFGYILEIVYGFFSIILGRTGSGIFALLLLLFSLVLLFPKFAKEILKIELDFTYLLKVEQAFKSLLMRVFGGENEKEDVGKSEPIAPKLNILQDSIYGNLQINKKGETNNLEQIIKDSNINASKNSITTAKENFEKLKNQILDETIEIDKQSLKESRSFVHEHSQQVRNFAQKASKMSISLDEDFNFISEEEVDMIPERFLKPKKLEDIKQIDTNKNLDEPSYKRKNIEIPVSNQEVKPKIFTKELELRENLIKKEKLEQEYKAYQNEILENKVKQEIKKLEEYDAINSSDIIEGNKYSFNSPKTIKAETEESDKINENKNLDKADNIFEFAPIVEELNHPYIEPTPIKNINEIVIEEKNTLDFIQNTETKIDNEKTNDQEIKLQKAVLAKEIAINQALLREIEQGEVEKPKDFTLPPLDFLANPKEHKQEINESEIDKKIYNLLEKLRRFKIGGDVISTYVGPVVTTFEFRPSADVKVSRILNLQDDLTMALMAKSIRIQAPIPGKDVVGIEVPNDEIQTIYLREILQSEVFKNAKSPLTIALGKDIVGNAFVTDLKKLPHLLIAGTTGSGKSVGINSMLLSLLYRNSPKTLRLMMIDPKMLEFSIYNDIPHLLTPVITDPKKAVNALSNMVAEMERRYRLMADAKTKNIENYNEKMKELGGEELPFIVVIIDELADLMMTAGKDVEFYIGRLAQMARASGIHLIVATQRPSVDVVTGLIKANLPSRISYKVGQKIDSKVILDAMGAESLLGRGDCLFTPPGTSSIVRLHAPFASEFEIEKIVDFLKDQQSVEYDESFLKDQQSVGVTTNESFDGEVDELYEEAKRVILEDGKTSISYLQRRLKIGYNRSANIIEQLTQNGILSEPDAKGQREIL</sequence>
<proteinExistence type="inferred from homology"/>
<organism>
    <name type="scientific">Campylobacter jejuni subsp. jejuni serotype O:23/36 (strain 81-176)</name>
    <dbReference type="NCBI Taxonomy" id="354242"/>
    <lineage>
        <taxon>Bacteria</taxon>
        <taxon>Pseudomonadati</taxon>
        <taxon>Campylobacterota</taxon>
        <taxon>Epsilonproteobacteria</taxon>
        <taxon>Campylobacterales</taxon>
        <taxon>Campylobacteraceae</taxon>
        <taxon>Campylobacter</taxon>
    </lineage>
</organism>
<dbReference type="EMBL" id="U06951">
    <property type="protein sequence ID" value="AAA61512.1"/>
    <property type="status" value="ALT_INIT"/>
    <property type="molecule type" value="Genomic_DNA"/>
</dbReference>
<dbReference type="EMBL" id="CP000538">
    <property type="protein sequence ID" value="EAQ72446.1"/>
    <property type="molecule type" value="Genomic_DNA"/>
</dbReference>
<dbReference type="RefSeq" id="WP_011812744.1">
    <property type="nucleotide sequence ID" value="NC_008787.1"/>
</dbReference>
<dbReference type="SMR" id="A1VZM0"/>
<dbReference type="KEGG" id="cjj:CJJ81176_0893"/>
<dbReference type="eggNOG" id="COG1196">
    <property type="taxonomic scope" value="Bacteria"/>
</dbReference>
<dbReference type="eggNOG" id="COG1674">
    <property type="taxonomic scope" value="Bacteria"/>
</dbReference>
<dbReference type="HOGENOM" id="CLU_001981_8_1_7"/>
<dbReference type="Proteomes" id="UP000000646">
    <property type="component" value="Chromosome"/>
</dbReference>
<dbReference type="GO" id="GO:0005886">
    <property type="term" value="C:plasma membrane"/>
    <property type="evidence" value="ECO:0007669"/>
    <property type="project" value="UniProtKB-SubCell"/>
</dbReference>
<dbReference type="GO" id="GO:0005524">
    <property type="term" value="F:ATP binding"/>
    <property type="evidence" value="ECO:0007669"/>
    <property type="project" value="UniProtKB-KW"/>
</dbReference>
<dbReference type="GO" id="GO:0003677">
    <property type="term" value="F:DNA binding"/>
    <property type="evidence" value="ECO:0007669"/>
    <property type="project" value="UniProtKB-KW"/>
</dbReference>
<dbReference type="GO" id="GO:0051301">
    <property type="term" value="P:cell division"/>
    <property type="evidence" value="ECO:0007669"/>
    <property type="project" value="UniProtKB-KW"/>
</dbReference>
<dbReference type="GO" id="GO:0007059">
    <property type="term" value="P:chromosome segregation"/>
    <property type="evidence" value="ECO:0007669"/>
    <property type="project" value="UniProtKB-KW"/>
</dbReference>
<dbReference type="CDD" id="cd01127">
    <property type="entry name" value="TrwB_TraG_TraD_VirD4"/>
    <property type="match status" value="1"/>
</dbReference>
<dbReference type="Gene3D" id="3.30.980.40">
    <property type="match status" value="1"/>
</dbReference>
<dbReference type="Gene3D" id="3.40.50.300">
    <property type="entry name" value="P-loop containing nucleotide triphosphate hydrolases"/>
    <property type="match status" value="1"/>
</dbReference>
<dbReference type="Gene3D" id="1.10.10.10">
    <property type="entry name" value="Winged helix-like DNA-binding domain superfamily/Winged helix DNA-binding domain"/>
    <property type="match status" value="1"/>
</dbReference>
<dbReference type="InterPro" id="IPR050206">
    <property type="entry name" value="FtsK/SpoIIIE/SftA"/>
</dbReference>
<dbReference type="InterPro" id="IPR041027">
    <property type="entry name" value="FtsK_alpha"/>
</dbReference>
<dbReference type="InterPro" id="IPR002543">
    <property type="entry name" value="FtsK_dom"/>
</dbReference>
<dbReference type="InterPro" id="IPR018541">
    <property type="entry name" value="Ftsk_gamma"/>
</dbReference>
<dbReference type="InterPro" id="IPR027417">
    <property type="entry name" value="P-loop_NTPase"/>
</dbReference>
<dbReference type="InterPro" id="IPR036388">
    <property type="entry name" value="WH-like_DNA-bd_sf"/>
</dbReference>
<dbReference type="InterPro" id="IPR036390">
    <property type="entry name" value="WH_DNA-bd_sf"/>
</dbReference>
<dbReference type="PANTHER" id="PTHR22683:SF41">
    <property type="entry name" value="DNA TRANSLOCASE FTSK"/>
    <property type="match status" value="1"/>
</dbReference>
<dbReference type="PANTHER" id="PTHR22683">
    <property type="entry name" value="SPORULATION PROTEIN RELATED"/>
    <property type="match status" value="1"/>
</dbReference>
<dbReference type="Pfam" id="PF17854">
    <property type="entry name" value="FtsK_alpha"/>
    <property type="match status" value="1"/>
</dbReference>
<dbReference type="Pfam" id="PF09397">
    <property type="entry name" value="FtsK_gamma"/>
    <property type="match status" value="1"/>
</dbReference>
<dbReference type="Pfam" id="PF01580">
    <property type="entry name" value="FtsK_SpoIIIE"/>
    <property type="match status" value="1"/>
</dbReference>
<dbReference type="SMART" id="SM00843">
    <property type="entry name" value="Ftsk_gamma"/>
    <property type="match status" value="1"/>
</dbReference>
<dbReference type="SUPFAM" id="SSF52540">
    <property type="entry name" value="P-loop containing nucleoside triphosphate hydrolases"/>
    <property type="match status" value="1"/>
</dbReference>
<dbReference type="SUPFAM" id="SSF46785">
    <property type="entry name" value="Winged helix' DNA-binding domain"/>
    <property type="match status" value="1"/>
</dbReference>
<dbReference type="PROSITE" id="PS50901">
    <property type="entry name" value="FTSK"/>
    <property type="match status" value="1"/>
</dbReference>
<evidence type="ECO:0000250" key="1"/>
<evidence type="ECO:0000255" key="2"/>
<evidence type="ECO:0000255" key="3">
    <source>
        <dbReference type="PROSITE-ProRule" id="PRU00289"/>
    </source>
</evidence>
<evidence type="ECO:0000305" key="4"/>
<comment type="function">
    <text evidence="1">Essential cell division protein that coordinates cell division and chromosome segregation. The N-terminus is involved in assembly of the cell-division machinery. The C-terminus functions as a DNA motor that moves dsDNA in an ATP-dependent manner towards the dif recombination site, which is located within the replication terminus region. Translocation stops specifically at Xer-dif sites, where FtsK interacts with the Xer recombinase, allowing activation of chromosome unlinking by recombination. FtsK orienting polar sequences (KOPS) guide the direction of DNA translocation. FtsK can remove proteins from DNA as it translocates, but translocation stops specifically at XerCD-dif site, thereby preventing removal of XerC and XerD from dif (By similarity).</text>
</comment>
<comment type="subunit">
    <text evidence="1">Homohexamer. Forms a ring that surrounds DNA (By similarity).</text>
</comment>
<comment type="subcellular location">
    <subcellularLocation>
        <location evidence="1">Cell inner membrane</location>
        <topology evidence="1">Multi-pass membrane protein</topology>
    </subcellularLocation>
    <text evidence="1">Located at the septum.</text>
</comment>
<comment type="domain">
    <text evidence="1">Consists of an N-terminal domain, which is sufficient for the localization to the septal ring and is required for cell division, followed by a linker domain, and a C-terminal domain, which forms the translocation motor involved in chromosome segregation. The C-terminal domain can be further subdivided into alpha, beta and gamma subdomains. The alpha and beta subdomains multimerise to produce a hexameric ring, contain the nucleotide binding motif and form the DNA pump. The gamma subdomain is a regulatory subdomain that controls translocation of DNA by recognition of KOPS motifs and interacts with XerD recombinase (By similarity).</text>
</comment>
<comment type="similarity">
    <text evidence="4">Belongs to the FtsK/SpoIIIE/SftA family.</text>
</comment>
<comment type="sequence caution" evidence="4">
    <conflict type="erroneous initiation">
        <sequence resource="EMBL-CDS" id="AAA61512"/>
    </conflict>
    <text>Truncated N-terminus.</text>
</comment>